<dbReference type="EC" id="7.5.2.12" evidence="1"/>
<dbReference type="EMBL" id="AM236080">
    <property type="protein sequence ID" value="CAK09719.1"/>
    <property type="molecule type" value="Genomic_DNA"/>
</dbReference>
<dbReference type="SMR" id="Q1MBG4"/>
<dbReference type="EnsemblBacteria" id="CAK09719">
    <property type="protein sequence ID" value="CAK09719"/>
    <property type="gene ID" value="RL4230"/>
</dbReference>
<dbReference type="KEGG" id="rle:RL4230"/>
<dbReference type="eggNOG" id="COG1129">
    <property type="taxonomic scope" value="Bacteria"/>
</dbReference>
<dbReference type="HOGENOM" id="CLU_000604_92_3_5"/>
<dbReference type="Proteomes" id="UP000006575">
    <property type="component" value="Chromosome"/>
</dbReference>
<dbReference type="GO" id="GO:0005886">
    <property type="term" value="C:plasma membrane"/>
    <property type="evidence" value="ECO:0007669"/>
    <property type="project" value="UniProtKB-SubCell"/>
</dbReference>
<dbReference type="GO" id="GO:0015612">
    <property type="term" value="F:ABC-type L-arabinose transporter activity"/>
    <property type="evidence" value="ECO:0007669"/>
    <property type="project" value="UniProtKB-EC"/>
</dbReference>
<dbReference type="GO" id="GO:0005524">
    <property type="term" value="F:ATP binding"/>
    <property type="evidence" value="ECO:0007669"/>
    <property type="project" value="UniProtKB-KW"/>
</dbReference>
<dbReference type="GO" id="GO:0016887">
    <property type="term" value="F:ATP hydrolysis activity"/>
    <property type="evidence" value="ECO:0007669"/>
    <property type="project" value="InterPro"/>
</dbReference>
<dbReference type="CDD" id="cd03216">
    <property type="entry name" value="ABC_Carb_Monos_I"/>
    <property type="match status" value="1"/>
</dbReference>
<dbReference type="CDD" id="cd03215">
    <property type="entry name" value="ABC_Carb_Monos_II"/>
    <property type="match status" value="1"/>
</dbReference>
<dbReference type="FunFam" id="3.40.50.300:FF:000126">
    <property type="entry name" value="Galactose/methyl galactoside import ATP-binding protein MglA"/>
    <property type="match status" value="1"/>
</dbReference>
<dbReference type="FunFam" id="3.40.50.300:FF:000127">
    <property type="entry name" value="Ribose import ATP-binding protein RbsA"/>
    <property type="match status" value="1"/>
</dbReference>
<dbReference type="Gene3D" id="3.40.50.300">
    <property type="entry name" value="P-loop containing nucleotide triphosphate hydrolases"/>
    <property type="match status" value="2"/>
</dbReference>
<dbReference type="InterPro" id="IPR003593">
    <property type="entry name" value="AAA+_ATPase"/>
</dbReference>
<dbReference type="InterPro" id="IPR050107">
    <property type="entry name" value="ABC_carbohydrate_import_ATPase"/>
</dbReference>
<dbReference type="InterPro" id="IPR003439">
    <property type="entry name" value="ABC_transporter-like_ATP-bd"/>
</dbReference>
<dbReference type="InterPro" id="IPR017871">
    <property type="entry name" value="ABC_transporter-like_CS"/>
</dbReference>
<dbReference type="InterPro" id="IPR027417">
    <property type="entry name" value="P-loop_NTPase"/>
</dbReference>
<dbReference type="NCBIfam" id="NF008442">
    <property type="entry name" value="PRK11288.1"/>
    <property type="match status" value="1"/>
</dbReference>
<dbReference type="PANTHER" id="PTHR43790:SF6">
    <property type="entry name" value="ARABINOSE IMPORT ATP-BINDING PROTEIN ARAG"/>
    <property type="match status" value="1"/>
</dbReference>
<dbReference type="PANTHER" id="PTHR43790">
    <property type="entry name" value="CARBOHYDRATE TRANSPORT ATP-BINDING PROTEIN MG119-RELATED"/>
    <property type="match status" value="1"/>
</dbReference>
<dbReference type="Pfam" id="PF00005">
    <property type="entry name" value="ABC_tran"/>
    <property type="match status" value="2"/>
</dbReference>
<dbReference type="SMART" id="SM00382">
    <property type="entry name" value="AAA"/>
    <property type="match status" value="2"/>
</dbReference>
<dbReference type="SUPFAM" id="SSF52540">
    <property type="entry name" value="P-loop containing nucleoside triphosphate hydrolases"/>
    <property type="match status" value="2"/>
</dbReference>
<dbReference type="PROSITE" id="PS00211">
    <property type="entry name" value="ABC_TRANSPORTER_1"/>
    <property type="match status" value="1"/>
</dbReference>
<dbReference type="PROSITE" id="PS50893">
    <property type="entry name" value="ABC_TRANSPORTER_2"/>
    <property type="match status" value="2"/>
</dbReference>
<dbReference type="PROSITE" id="PS51268">
    <property type="entry name" value="ARAG"/>
    <property type="match status" value="1"/>
</dbReference>
<evidence type="ECO:0000255" key="1">
    <source>
        <dbReference type="HAMAP-Rule" id="MF_01721"/>
    </source>
</evidence>
<name>ARAG_RHIJ3</name>
<gene>
    <name evidence="1" type="primary">araG</name>
    <name type="ordered locus">RL4230</name>
</gene>
<organism>
    <name type="scientific">Rhizobium johnstonii (strain DSM 114642 / LMG 32736 / 3841)</name>
    <name type="common">Rhizobium leguminosarum bv. viciae</name>
    <dbReference type="NCBI Taxonomy" id="216596"/>
    <lineage>
        <taxon>Bacteria</taxon>
        <taxon>Pseudomonadati</taxon>
        <taxon>Pseudomonadota</taxon>
        <taxon>Alphaproteobacteria</taxon>
        <taxon>Hyphomicrobiales</taxon>
        <taxon>Rhizobiaceae</taxon>
        <taxon>Rhizobium/Agrobacterium group</taxon>
        <taxon>Rhizobium</taxon>
        <taxon>Rhizobium johnstonii</taxon>
    </lineage>
</organism>
<proteinExistence type="inferred from homology"/>
<reference key="1">
    <citation type="journal article" date="2006" name="Genome Biol.">
        <title>The genome of Rhizobium leguminosarum has recognizable core and accessory components.</title>
        <authorList>
            <person name="Young J.P.W."/>
            <person name="Crossman L.C."/>
            <person name="Johnston A.W.B."/>
            <person name="Thomson N.R."/>
            <person name="Ghazoui Z.F."/>
            <person name="Hull K.H."/>
            <person name="Wexler M."/>
            <person name="Curson A.R.J."/>
            <person name="Todd J.D."/>
            <person name="Poole P.S."/>
            <person name="Mauchline T.H."/>
            <person name="East A.K."/>
            <person name="Quail M.A."/>
            <person name="Churcher C."/>
            <person name="Arrowsmith C."/>
            <person name="Cherevach I."/>
            <person name="Chillingworth T."/>
            <person name="Clarke K."/>
            <person name="Cronin A."/>
            <person name="Davis P."/>
            <person name="Fraser A."/>
            <person name="Hance Z."/>
            <person name="Hauser H."/>
            <person name="Jagels K."/>
            <person name="Moule S."/>
            <person name="Mungall K."/>
            <person name="Norbertczak H."/>
            <person name="Rabbinowitsch E."/>
            <person name="Sanders M."/>
            <person name="Simmonds M."/>
            <person name="Whitehead S."/>
            <person name="Parkhill J."/>
        </authorList>
    </citation>
    <scope>NUCLEOTIDE SEQUENCE [LARGE SCALE GENOMIC DNA]</scope>
    <source>
        <strain>DSM 114642 / LMG 32736 / 3841</strain>
    </source>
</reference>
<protein>
    <recommendedName>
        <fullName evidence="1">Arabinose import ATP-binding protein AraG</fullName>
        <ecNumber evidence="1">7.5.2.12</ecNumber>
    </recommendedName>
</protein>
<sequence>MMAFLEFSNISKGYPGVQALANVSFTVEKGAVHGLMGENGAGKSTLIRVLSGDQAADAGNILIDGEEQKYGSVRDAFHAGVIVIHQELQLVPELTVAENLWLGRFPAKGGVIHSKTLIETVRSKLEEIGIDIDPSAKVASLSIGARQMVEIAKAVMLDARVIALDEPTSSLSSRESEILFSLIDRLKAKGTVILYVSHRLDEIFRLCDSLTVLRDGKLAAHHPQIAETTREQIISEMVGREISNVWGWRERPLGGIRLEVNGLSGPRLRHPISFSVRQGEILGFFGLIGAGRSEMARLLYGADARHQGQVTIDGVAVSPNNPKAAINAGMVLCPEDRKFDGIVQGRSIEENIAISSRRHFSPFGILSPRQEAALADRFIAKLRVRTPSRKQDIINLSGGNQQKVILGRWLSEQGIKVLVIDEPTRGIDVGAKSEIYEILYELAAGGMAIVVISSELPEVMGISDRIMVMCQGRVAANVARPDFDERSILTAALPDKNAAGTL</sequence>
<keyword id="KW-0067">ATP-binding</keyword>
<keyword id="KW-0997">Cell inner membrane</keyword>
<keyword id="KW-1003">Cell membrane</keyword>
<keyword id="KW-0472">Membrane</keyword>
<keyword id="KW-0547">Nucleotide-binding</keyword>
<keyword id="KW-0677">Repeat</keyword>
<keyword id="KW-0762">Sugar transport</keyword>
<keyword id="KW-1278">Translocase</keyword>
<keyword id="KW-0813">Transport</keyword>
<comment type="function">
    <text evidence="1">Part of the ABC transporter complex AraFGH involved in arabinose import. Responsible for energy coupling to the transport system.</text>
</comment>
<comment type="catalytic activity">
    <reaction evidence="1">
        <text>L-arabinose(out) + ATP + H2O = L-arabinose(in) + ADP + phosphate + H(+)</text>
        <dbReference type="Rhea" id="RHEA:30007"/>
        <dbReference type="ChEBI" id="CHEBI:15377"/>
        <dbReference type="ChEBI" id="CHEBI:15378"/>
        <dbReference type="ChEBI" id="CHEBI:17535"/>
        <dbReference type="ChEBI" id="CHEBI:30616"/>
        <dbReference type="ChEBI" id="CHEBI:43474"/>
        <dbReference type="ChEBI" id="CHEBI:456216"/>
        <dbReference type="EC" id="7.5.2.12"/>
    </reaction>
</comment>
<comment type="subunit">
    <text evidence="1">The complex is composed of two ATP-binding proteins (AraG), two transmembrane proteins (AraH) and a solute-binding protein (AraF).</text>
</comment>
<comment type="subcellular location">
    <subcellularLocation>
        <location evidence="1">Cell inner membrane</location>
        <topology evidence="1">Peripheral membrane protein</topology>
    </subcellularLocation>
</comment>
<comment type="similarity">
    <text evidence="1">Belongs to the ABC transporter superfamily. Arabinose importer (TC 3.A.1.2.2) family.</text>
</comment>
<feature type="chain" id="PRO_0000270476" description="Arabinose import ATP-binding protein AraG">
    <location>
        <begin position="1"/>
        <end position="502"/>
    </location>
</feature>
<feature type="domain" description="ABC transporter 1" evidence="1">
    <location>
        <begin position="5"/>
        <end position="240"/>
    </location>
</feature>
<feature type="domain" description="ABC transporter 2" evidence="1">
    <location>
        <begin position="253"/>
        <end position="496"/>
    </location>
</feature>
<feature type="binding site" evidence="1">
    <location>
        <begin position="37"/>
        <end position="44"/>
    </location>
    <ligand>
        <name>ATP</name>
        <dbReference type="ChEBI" id="CHEBI:30616"/>
    </ligand>
</feature>
<accession>Q1MBG4</accession>